<evidence type="ECO:0000255" key="1">
    <source>
        <dbReference type="HAMAP-Rule" id="MF_00212"/>
    </source>
</evidence>
<evidence type="ECO:0000305" key="2"/>
<gene>
    <name evidence="1" type="primary">mqo1</name>
    <name type="ordered locus">SE_1943</name>
</gene>
<organism>
    <name type="scientific">Staphylococcus epidermidis (strain ATCC 12228 / FDA PCI 1200)</name>
    <dbReference type="NCBI Taxonomy" id="176280"/>
    <lineage>
        <taxon>Bacteria</taxon>
        <taxon>Bacillati</taxon>
        <taxon>Bacillota</taxon>
        <taxon>Bacilli</taxon>
        <taxon>Bacillales</taxon>
        <taxon>Staphylococcaceae</taxon>
        <taxon>Staphylococcus</taxon>
    </lineage>
</organism>
<accession>Q8CN91</accession>
<keyword id="KW-0274">FAD</keyword>
<keyword id="KW-0285">Flavoprotein</keyword>
<keyword id="KW-0560">Oxidoreductase</keyword>
<keyword id="KW-0816">Tricarboxylic acid cycle</keyword>
<dbReference type="EC" id="1.1.5.4" evidence="1"/>
<dbReference type="EMBL" id="AE015929">
    <property type="protein sequence ID" value="AAO05584.1"/>
    <property type="status" value="ALT_INIT"/>
    <property type="molecule type" value="Genomic_DNA"/>
</dbReference>
<dbReference type="RefSeq" id="NP_765498.1">
    <property type="nucleotide sequence ID" value="NC_004461.1"/>
</dbReference>
<dbReference type="SMR" id="Q8CN91"/>
<dbReference type="KEGG" id="sep:SE_1943"/>
<dbReference type="PATRIC" id="fig|176280.10.peg.1896"/>
<dbReference type="eggNOG" id="COG0579">
    <property type="taxonomic scope" value="Bacteria"/>
</dbReference>
<dbReference type="HOGENOM" id="CLU_028151_0_0_9"/>
<dbReference type="OrthoDB" id="9763983at2"/>
<dbReference type="UniPathway" id="UPA00223">
    <property type="reaction ID" value="UER01008"/>
</dbReference>
<dbReference type="Proteomes" id="UP000001411">
    <property type="component" value="Chromosome"/>
</dbReference>
<dbReference type="GO" id="GO:0047545">
    <property type="term" value="F:2-hydroxyglutarate dehydrogenase activity"/>
    <property type="evidence" value="ECO:0007669"/>
    <property type="project" value="TreeGrafter"/>
</dbReference>
<dbReference type="GO" id="GO:0008924">
    <property type="term" value="F:L-malate dehydrogenase (quinone) activity"/>
    <property type="evidence" value="ECO:0007669"/>
    <property type="project" value="UniProtKB-UniRule"/>
</dbReference>
<dbReference type="GO" id="GO:0006099">
    <property type="term" value="P:tricarboxylic acid cycle"/>
    <property type="evidence" value="ECO:0007669"/>
    <property type="project" value="UniProtKB-UniRule"/>
</dbReference>
<dbReference type="Gene3D" id="3.30.9.10">
    <property type="entry name" value="D-Amino Acid Oxidase, subunit A, domain 2"/>
    <property type="match status" value="1"/>
</dbReference>
<dbReference type="Gene3D" id="3.50.50.60">
    <property type="entry name" value="FAD/NAD(P)-binding domain"/>
    <property type="match status" value="1"/>
</dbReference>
<dbReference type="HAMAP" id="MF_00212">
    <property type="entry name" value="MQO"/>
    <property type="match status" value="1"/>
</dbReference>
<dbReference type="InterPro" id="IPR036188">
    <property type="entry name" value="FAD/NAD-bd_sf"/>
</dbReference>
<dbReference type="InterPro" id="IPR006231">
    <property type="entry name" value="MQO"/>
</dbReference>
<dbReference type="NCBIfam" id="TIGR01320">
    <property type="entry name" value="mal_quin_oxido"/>
    <property type="match status" value="1"/>
</dbReference>
<dbReference type="NCBIfam" id="NF003603">
    <property type="entry name" value="PRK05257.1-1"/>
    <property type="match status" value="1"/>
</dbReference>
<dbReference type="NCBIfam" id="NF003604">
    <property type="entry name" value="PRK05257.1-3"/>
    <property type="match status" value="1"/>
</dbReference>
<dbReference type="NCBIfam" id="NF003605">
    <property type="entry name" value="PRK05257.1-4"/>
    <property type="match status" value="1"/>
</dbReference>
<dbReference type="NCBIfam" id="NF003606">
    <property type="entry name" value="PRK05257.2-1"/>
    <property type="match status" value="1"/>
</dbReference>
<dbReference type="NCBIfam" id="NF003611">
    <property type="entry name" value="PRK05257.3-2"/>
    <property type="match status" value="1"/>
</dbReference>
<dbReference type="NCBIfam" id="NF009875">
    <property type="entry name" value="PRK13339.1"/>
    <property type="match status" value="1"/>
</dbReference>
<dbReference type="PANTHER" id="PTHR43104">
    <property type="entry name" value="L-2-HYDROXYGLUTARATE DEHYDROGENASE, MITOCHONDRIAL"/>
    <property type="match status" value="1"/>
</dbReference>
<dbReference type="PANTHER" id="PTHR43104:SF2">
    <property type="entry name" value="L-2-HYDROXYGLUTARATE DEHYDROGENASE, MITOCHONDRIAL"/>
    <property type="match status" value="1"/>
</dbReference>
<dbReference type="Pfam" id="PF06039">
    <property type="entry name" value="Mqo"/>
    <property type="match status" value="1"/>
</dbReference>
<dbReference type="SUPFAM" id="SSF51905">
    <property type="entry name" value="FAD/NAD(P)-binding domain"/>
    <property type="match status" value="1"/>
</dbReference>
<sequence>MNTQHSKTDVILIGGGIMSATLGTLLKELTPEKDIQLFERLSQPGEESSNVWNNAGTGHSALCELNYTKEGKDGSVDITKAIHINEQFQLSKQFWAYLIREGHIESPDKFIQSVPHMSFVKGEENVKFLKSRVASLQKNVLFEKMKISQDPEKINSWVPLMMEGRQSDEAIAITYDETGTDVNFGALTKKLIANLQQKNVGINYKHEVLDIKKLNNGNWQVVVKDLNTSNVMNYESKFVFIGAGGASLPLLQKTKIKESKHIGGFPVSGLFLRCKNPDVIHRHHAKVYGKAEVGAPPMSVPHLDTRFVNGEKSLLFGPFAGFSPKFLKNGSYLDLVKSVKPNNMITMLSAGVKEFNLTKYLVSQLMLSNEERINDLRVFLPEAKDEDWEVITAGQRVQVIKDTDKSKGQLQFGTEVITSEDGSLAALLGASPGASTAVDIMFDVLQRCYKSEFKSWEPKIKEMVPSFGLKLSEHEDMYHSINEEVKKYLNVK</sequence>
<name>MQO1_STAES</name>
<protein>
    <recommendedName>
        <fullName evidence="1">Probable malate:quinone oxidoreductase 1</fullName>
        <ecNumber evidence="1">1.1.5.4</ecNumber>
    </recommendedName>
    <alternativeName>
        <fullName evidence="1">MQO 1</fullName>
    </alternativeName>
    <alternativeName>
        <fullName evidence="1">Malate dehydrogenase [quinone] 1</fullName>
    </alternativeName>
</protein>
<reference key="1">
    <citation type="journal article" date="2003" name="Mol. Microbiol.">
        <title>Genome-based analysis of virulence genes in a non-biofilm-forming Staphylococcus epidermidis strain (ATCC 12228).</title>
        <authorList>
            <person name="Zhang Y.-Q."/>
            <person name="Ren S.-X."/>
            <person name="Li H.-L."/>
            <person name="Wang Y.-X."/>
            <person name="Fu G."/>
            <person name="Yang J."/>
            <person name="Qin Z.-Q."/>
            <person name="Miao Y.-G."/>
            <person name="Wang W.-Y."/>
            <person name="Chen R.-S."/>
            <person name="Shen Y."/>
            <person name="Chen Z."/>
            <person name="Yuan Z.-H."/>
            <person name="Zhao G.-P."/>
            <person name="Qu D."/>
            <person name="Danchin A."/>
            <person name="Wen Y.-M."/>
        </authorList>
    </citation>
    <scope>NUCLEOTIDE SEQUENCE [LARGE SCALE GENOMIC DNA]</scope>
    <source>
        <strain>ATCC 12228 / FDA PCI 1200</strain>
    </source>
</reference>
<feature type="chain" id="PRO_0000128749" description="Probable malate:quinone oxidoreductase 1">
    <location>
        <begin position="1"/>
        <end position="492"/>
    </location>
</feature>
<comment type="catalytic activity">
    <reaction evidence="1">
        <text>(S)-malate + a quinone = a quinol + oxaloacetate</text>
        <dbReference type="Rhea" id="RHEA:46012"/>
        <dbReference type="ChEBI" id="CHEBI:15589"/>
        <dbReference type="ChEBI" id="CHEBI:16452"/>
        <dbReference type="ChEBI" id="CHEBI:24646"/>
        <dbReference type="ChEBI" id="CHEBI:132124"/>
        <dbReference type="EC" id="1.1.5.4"/>
    </reaction>
</comment>
<comment type="cofactor">
    <cofactor evidence="1">
        <name>FAD</name>
        <dbReference type="ChEBI" id="CHEBI:57692"/>
    </cofactor>
</comment>
<comment type="pathway">
    <text evidence="1">Carbohydrate metabolism; tricarboxylic acid cycle; oxaloacetate from (S)-malate (quinone route): step 1/1.</text>
</comment>
<comment type="similarity">
    <text evidence="1">Belongs to the MQO family.</text>
</comment>
<comment type="sequence caution" evidence="2">
    <conflict type="erroneous initiation">
        <sequence resource="EMBL-CDS" id="AAO05584"/>
    </conflict>
</comment>
<proteinExistence type="inferred from homology"/>